<sequence length="1158" mass="134505">MTLHAYLGRAGTGKSTKMLTEIKQKMKADPLGDPIILIAPTQSTFQLEQAFVNDPELNGSLRTEVLHFERLSHRIFQEVGSYSEQKLSKAATEMMIYNIVQEQQKYLKLYQSQAKYYGFSEKLTEQIQDFKKYAVTPEHLEHFIADKNMQTRTKNKLEDIALIYREFEQRIQNEFITGEDSLQYFIDCMPKSEWLKRADIYIDGFHNFSTIEYLIIKGLIKYAKSVTIILTTDGNHDQFSLFRKPSEVLRHIEEIANELNISIERQYFNQLYRFNNQDLKHLEQEFDALQINRVACQGHINILESATMREEINEIARRIIVDIRDKQLRYQDIAILYRDESYAYLFDSILPLYNIPYNIDTKRSMTHHPVMEMIRSLIEVIQSNWQVNPMLRLLKTDVLTASYLKSAYLVDLLENFVLERGIYGKRWLDDELFNVEHFSKMGRKAHKLTEDERNTFEQVVKLKKDVIDKILHFEKQMSQAETVKDFATAFYESMEYFELPNQLMTERDELDLNGNHEKAEEIDQIWNGLIQILDDLVLVFGDEPMSMERFLEVFDIGLEQLEFVMIPQTLDQVSIGTMDLAKVDNKQHVYLVGMNDGTMPQPVTASSLITDEEKKYFEQQANVELSPTSDILQMDEAFVCYVAMTRAKGDVTFSYSLMGSSGDDKEISPFLNQIQSLFNQLEITNIPQYHEVNPLSLMQHAKQTKITLFEALRAWLYDEIVADSWLDAYQVIRDSDHLNQGLDYLMSALTFDNETVKLGETLSKDLYGKEINASVSRFEGYQQCPFKHYASHGLKLNERTKYELQNFDLGDIFHSVLKYISERINGDFKQLDLKKIRQLTNEALEEILPKVQFNLLNSSAYYRYLSRRIGAIVETTLSALKYQGTYSKFMPKHFETSFRRKPRTNDELIAQTLTTTQGIPINIRGQIDRIDTYTKNDTSFVNIIDYKSSEGSATLDLTKVYYGMQMQMMTYMDIVLQNKQRLGLTDIVKPGGLLYFHVHEPRIKFKSWSDIDEDKLEQDLIKKFKLSGLVNADQTVIDALDIRLEPKFTSDIVPVGLNKDGSLSKRGSQVADEATIYKFIQHNKENFIETASNIMDGHTEVAPLKYKQKLPCAFCSYQSVCHVDGMIDSKRYRTVDETINPIEAIQNININDEFGGEQ</sequence>
<keyword id="KW-0004">4Fe-4S</keyword>
<keyword id="KW-0067">ATP-binding</keyword>
<keyword id="KW-0227">DNA damage</keyword>
<keyword id="KW-0234">DNA repair</keyword>
<keyword id="KW-0238">DNA-binding</keyword>
<keyword id="KW-0269">Exonuclease</keyword>
<keyword id="KW-0347">Helicase</keyword>
<keyword id="KW-0378">Hydrolase</keyword>
<keyword id="KW-0408">Iron</keyword>
<keyword id="KW-0411">Iron-sulfur</keyword>
<keyword id="KW-0479">Metal-binding</keyword>
<keyword id="KW-0540">Nuclease</keyword>
<keyword id="KW-0547">Nucleotide-binding</keyword>
<keyword id="KW-1185">Reference proteome</keyword>
<comment type="function">
    <text evidence="1">The heterodimer acts as both an ATP-dependent DNA helicase and an ATP-dependent, dual-direction single-stranded exonuclease. Recognizes the chi site generating a DNA molecule suitable for the initiation of homologous recombination. The AddB subunit has 5' -&gt; 3' nuclease activity but not helicase activity.</text>
</comment>
<comment type="cofactor">
    <cofactor evidence="1">
        <name>Mg(2+)</name>
        <dbReference type="ChEBI" id="CHEBI:18420"/>
    </cofactor>
</comment>
<comment type="cofactor">
    <cofactor evidence="1">
        <name>[4Fe-4S] cluster</name>
        <dbReference type="ChEBI" id="CHEBI:49883"/>
    </cofactor>
    <text evidence="1">Binds 1 [4Fe-4S] cluster.</text>
</comment>
<comment type="subunit">
    <text evidence="1">Heterodimer of AddA and AddB.</text>
</comment>
<comment type="miscellaneous">
    <text evidence="1">Despite having conserved helicase domains, this subunit does not have helicase activity.</text>
</comment>
<comment type="similarity">
    <text evidence="1">Belongs to the helicase family. AddB/RexB type 1 subfamily.</text>
</comment>
<name>ADDB_STAA8</name>
<feature type="chain" id="PRO_0000379214" description="ATP-dependent helicase/deoxyribonuclease subunit B">
    <location>
        <begin position="1"/>
        <end position="1158"/>
    </location>
</feature>
<feature type="domain" description="UvrD-like helicase ATP-binding" evidence="1">
    <location>
        <begin position="1"/>
        <end position="275"/>
    </location>
</feature>
<feature type="domain" description="UvrD-like helicase C-terminal" evidence="1">
    <location>
        <begin position="269"/>
        <end position="583"/>
    </location>
</feature>
<feature type="binding site" evidence="1">
    <location>
        <begin position="8"/>
        <end position="15"/>
    </location>
    <ligand>
        <name>ATP</name>
        <dbReference type="ChEBI" id="CHEBI:30616"/>
    </ligand>
</feature>
<feature type="binding site" evidence="1">
    <location>
        <position position="784"/>
    </location>
    <ligand>
        <name>[4Fe-4S] cluster</name>
        <dbReference type="ChEBI" id="CHEBI:49883"/>
    </ligand>
</feature>
<feature type="binding site" evidence="1">
    <location>
        <position position="1112"/>
    </location>
    <ligand>
        <name>[4Fe-4S] cluster</name>
        <dbReference type="ChEBI" id="CHEBI:49883"/>
    </ligand>
</feature>
<feature type="binding site" evidence="1">
    <location>
        <position position="1115"/>
    </location>
    <ligand>
        <name>[4Fe-4S] cluster</name>
        <dbReference type="ChEBI" id="CHEBI:49883"/>
    </ligand>
</feature>
<feature type="binding site" evidence="1">
    <location>
        <position position="1121"/>
    </location>
    <ligand>
        <name>[4Fe-4S] cluster</name>
        <dbReference type="ChEBI" id="CHEBI:49883"/>
    </ligand>
</feature>
<organism>
    <name type="scientific">Staphylococcus aureus (strain NCTC 8325 / PS 47)</name>
    <dbReference type="NCBI Taxonomy" id="93061"/>
    <lineage>
        <taxon>Bacteria</taxon>
        <taxon>Bacillati</taxon>
        <taxon>Bacillota</taxon>
        <taxon>Bacilli</taxon>
        <taxon>Bacillales</taxon>
        <taxon>Staphylococcaceae</taxon>
        <taxon>Staphylococcus</taxon>
    </lineage>
</organism>
<dbReference type="EC" id="3.1.-.-" evidence="1"/>
<dbReference type="EMBL" id="CP000253">
    <property type="protein sequence ID" value="ABD30029.1"/>
    <property type="molecule type" value="Genomic_DNA"/>
</dbReference>
<dbReference type="RefSeq" id="WP_000172342.1">
    <property type="nucleotide sequence ID" value="NZ_LS483365.1"/>
</dbReference>
<dbReference type="RefSeq" id="YP_499457.1">
    <property type="nucleotide sequence ID" value="NC_007795.1"/>
</dbReference>
<dbReference type="SMR" id="Q2FZT6"/>
<dbReference type="STRING" id="93061.SAOUHSC_00904"/>
<dbReference type="PaxDb" id="1280-SAXN108_0961"/>
<dbReference type="GeneID" id="3921750"/>
<dbReference type="KEGG" id="sao:SAOUHSC_00904"/>
<dbReference type="PATRIC" id="fig|93061.5.peg.825"/>
<dbReference type="eggNOG" id="COG3857">
    <property type="taxonomic scope" value="Bacteria"/>
</dbReference>
<dbReference type="HOGENOM" id="CLU_007838_0_0_9"/>
<dbReference type="OrthoDB" id="9758506at2"/>
<dbReference type="PRO" id="PR:Q2FZT6"/>
<dbReference type="Proteomes" id="UP000008816">
    <property type="component" value="Chromosome"/>
</dbReference>
<dbReference type="GO" id="GO:0005829">
    <property type="term" value="C:cytosol"/>
    <property type="evidence" value="ECO:0000318"/>
    <property type="project" value="GO_Central"/>
</dbReference>
<dbReference type="GO" id="GO:0033202">
    <property type="term" value="C:DNA helicase complex"/>
    <property type="evidence" value="ECO:0000318"/>
    <property type="project" value="GO_Central"/>
</dbReference>
<dbReference type="GO" id="GO:0043138">
    <property type="term" value="F:3'-5' DNA helicase activity"/>
    <property type="evidence" value="ECO:0000318"/>
    <property type="project" value="GO_Central"/>
</dbReference>
<dbReference type="GO" id="GO:0051539">
    <property type="term" value="F:4 iron, 4 sulfur cluster binding"/>
    <property type="evidence" value="ECO:0007669"/>
    <property type="project" value="UniProtKB-KW"/>
</dbReference>
<dbReference type="GO" id="GO:0008409">
    <property type="term" value="F:5'-3' exonuclease activity"/>
    <property type="evidence" value="ECO:0007669"/>
    <property type="project" value="UniProtKB-UniRule"/>
</dbReference>
<dbReference type="GO" id="GO:0005524">
    <property type="term" value="F:ATP binding"/>
    <property type="evidence" value="ECO:0007669"/>
    <property type="project" value="UniProtKB-UniRule"/>
</dbReference>
<dbReference type="GO" id="GO:0003690">
    <property type="term" value="F:double-stranded DNA binding"/>
    <property type="evidence" value="ECO:0007669"/>
    <property type="project" value="UniProtKB-UniRule"/>
</dbReference>
<dbReference type="GO" id="GO:0046872">
    <property type="term" value="F:metal ion binding"/>
    <property type="evidence" value="ECO:0007669"/>
    <property type="project" value="UniProtKB-KW"/>
</dbReference>
<dbReference type="GO" id="GO:0000724">
    <property type="term" value="P:double-strand break repair via homologous recombination"/>
    <property type="evidence" value="ECO:0007669"/>
    <property type="project" value="UniProtKB-UniRule"/>
</dbReference>
<dbReference type="GO" id="GO:0000725">
    <property type="term" value="P:recombinational repair"/>
    <property type="evidence" value="ECO:0000318"/>
    <property type="project" value="GO_Central"/>
</dbReference>
<dbReference type="Gene3D" id="3.90.320.10">
    <property type="match status" value="1"/>
</dbReference>
<dbReference type="Gene3D" id="3.40.50.300">
    <property type="entry name" value="P-loop containing nucleotide triphosphate hydrolases"/>
    <property type="match status" value="4"/>
</dbReference>
<dbReference type="HAMAP" id="MF_01452">
    <property type="entry name" value="AddB_type1"/>
    <property type="match status" value="1"/>
</dbReference>
<dbReference type="InterPro" id="IPR049035">
    <property type="entry name" value="ADDB_N"/>
</dbReference>
<dbReference type="InterPro" id="IPR014140">
    <property type="entry name" value="DNA_helicase_suAddB"/>
</dbReference>
<dbReference type="InterPro" id="IPR014017">
    <property type="entry name" value="DNA_helicase_UvrD-like_C"/>
</dbReference>
<dbReference type="InterPro" id="IPR027417">
    <property type="entry name" value="P-loop_NTPase"/>
</dbReference>
<dbReference type="InterPro" id="IPR011604">
    <property type="entry name" value="PDDEXK-like_dom_sf"/>
</dbReference>
<dbReference type="InterPro" id="IPR038726">
    <property type="entry name" value="PDDEXK_AddAB-type"/>
</dbReference>
<dbReference type="NCBIfam" id="TIGR02773">
    <property type="entry name" value="addB_Gpos"/>
    <property type="match status" value="1"/>
</dbReference>
<dbReference type="PANTHER" id="PTHR30591">
    <property type="entry name" value="RECBCD ENZYME SUBUNIT RECC"/>
    <property type="match status" value="1"/>
</dbReference>
<dbReference type="PANTHER" id="PTHR30591:SF1">
    <property type="entry name" value="RECBCD ENZYME SUBUNIT RECC"/>
    <property type="match status" value="1"/>
</dbReference>
<dbReference type="Pfam" id="PF21445">
    <property type="entry name" value="ADDB_N"/>
    <property type="match status" value="1"/>
</dbReference>
<dbReference type="Pfam" id="PF12705">
    <property type="entry name" value="PDDEXK_1"/>
    <property type="match status" value="1"/>
</dbReference>
<dbReference type="SUPFAM" id="SSF52540">
    <property type="entry name" value="P-loop containing nucleoside triphosphate hydrolases"/>
    <property type="match status" value="1"/>
</dbReference>
<dbReference type="PROSITE" id="PS51198">
    <property type="entry name" value="UVRD_HELICASE_ATP_BIND"/>
    <property type="match status" value="1"/>
</dbReference>
<dbReference type="PROSITE" id="PS51217">
    <property type="entry name" value="UVRD_HELICASE_CTER"/>
    <property type="match status" value="1"/>
</dbReference>
<proteinExistence type="inferred from homology"/>
<accession>Q2FZT6</accession>
<gene>
    <name evidence="1" type="primary">addB</name>
    <name type="ordered locus">SAOUHSC_00904</name>
</gene>
<evidence type="ECO:0000255" key="1">
    <source>
        <dbReference type="HAMAP-Rule" id="MF_01452"/>
    </source>
</evidence>
<reference key="1">
    <citation type="book" date="2006" name="Gram positive pathogens, 2nd edition">
        <title>The Staphylococcus aureus NCTC 8325 genome.</title>
        <editorList>
            <person name="Fischetti V."/>
            <person name="Novick R."/>
            <person name="Ferretti J."/>
            <person name="Portnoy D."/>
            <person name="Rood J."/>
        </editorList>
        <authorList>
            <person name="Gillaspy A.F."/>
            <person name="Worrell V."/>
            <person name="Orvis J."/>
            <person name="Roe B.A."/>
            <person name="Dyer D.W."/>
            <person name="Iandolo J.J."/>
        </authorList>
    </citation>
    <scope>NUCLEOTIDE SEQUENCE [LARGE SCALE GENOMIC DNA]</scope>
    <source>
        <strain>NCTC 8325 / PS 47</strain>
    </source>
</reference>
<protein>
    <recommendedName>
        <fullName evidence="1">ATP-dependent helicase/deoxyribonuclease subunit B</fullName>
        <ecNumber evidence="1">3.1.-.-</ecNumber>
    </recommendedName>
    <alternativeName>
        <fullName evidence="1">ATP-dependent helicase/nuclease subunit AddB</fullName>
    </alternativeName>
</protein>